<reference key="1">
    <citation type="submission" date="2008-03" db="EMBL/GenBank/DDBJ databases">
        <title>Complete sequence of Thermoproteus neutrophilus V24Sta.</title>
        <authorList>
            <consortium name="US DOE Joint Genome Institute"/>
            <person name="Copeland A."/>
            <person name="Lucas S."/>
            <person name="Lapidus A."/>
            <person name="Glavina del Rio T."/>
            <person name="Dalin E."/>
            <person name="Tice H."/>
            <person name="Bruce D."/>
            <person name="Goodwin L."/>
            <person name="Pitluck S."/>
            <person name="Sims D."/>
            <person name="Brettin T."/>
            <person name="Detter J.C."/>
            <person name="Han C."/>
            <person name="Kuske C.R."/>
            <person name="Schmutz J."/>
            <person name="Larimer F."/>
            <person name="Land M."/>
            <person name="Hauser L."/>
            <person name="Kyrpides N."/>
            <person name="Mikhailova N."/>
            <person name="Biddle J.F."/>
            <person name="Zhang Z."/>
            <person name="Fitz-Gibbon S.T."/>
            <person name="Lowe T.M."/>
            <person name="Saltikov C."/>
            <person name="House C.H."/>
            <person name="Richardson P."/>
        </authorList>
    </citation>
    <scope>NUCLEOTIDE SEQUENCE [LARGE SCALE GENOMIC DNA]</scope>
    <source>
        <strain>DSM 2338 / JCM 9278 / NBRC 100436 / V24Sta</strain>
    </source>
</reference>
<protein>
    <recommendedName>
        <fullName evidence="1">Protoheme IX farnesyltransferase</fullName>
        <ecNumber evidence="1">2.5.1.141</ecNumber>
    </recommendedName>
    <alternativeName>
        <fullName evidence="1">Heme B farnesyltransferase</fullName>
    </alternativeName>
    <alternativeName>
        <fullName evidence="1">Heme O synthase</fullName>
    </alternativeName>
</protein>
<organism>
    <name type="scientific">Pyrobaculum neutrophilum (strain DSM 2338 / JCM 9278 / NBRC 100436 / V24Sta)</name>
    <name type="common">Thermoproteus neutrophilus</name>
    <dbReference type="NCBI Taxonomy" id="444157"/>
    <lineage>
        <taxon>Archaea</taxon>
        <taxon>Thermoproteota</taxon>
        <taxon>Thermoprotei</taxon>
        <taxon>Thermoproteales</taxon>
        <taxon>Thermoproteaceae</taxon>
        <taxon>Pyrobaculum</taxon>
    </lineage>
</organism>
<accession>B1YB28</accession>
<name>COXX_PYRNV</name>
<keyword id="KW-1003">Cell membrane</keyword>
<keyword id="KW-0350">Heme biosynthesis</keyword>
<keyword id="KW-0472">Membrane</keyword>
<keyword id="KW-0808">Transferase</keyword>
<keyword id="KW-0812">Transmembrane</keyword>
<keyword id="KW-1133">Transmembrane helix</keyword>
<feature type="chain" id="PRO_0000346097" description="Protoheme IX farnesyltransferase">
    <location>
        <begin position="1"/>
        <end position="278"/>
    </location>
</feature>
<feature type="transmembrane region" description="Helical" evidence="1">
    <location>
        <begin position="12"/>
        <end position="32"/>
    </location>
</feature>
<feature type="transmembrane region" description="Helical" evidence="1">
    <location>
        <begin position="36"/>
        <end position="56"/>
    </location>
</feature>
<feature type="transmembrane region" description="Helical" evidence="1">
    <location>
        <begin position="72"/>
        <end position="92"/>
    </location>
</feature>
<feature type="transmembrane region" description="Helical" evidence="1">
    <location>
        <begin position="105"/>
        <end position="124"/>
    </location>
</feature>
<feature type="transmembrane region" description="Helical" evidence="1">
    <location>
        <begin position="130"/>
        <end position="150"/>
    </location>
</feature>
<feature type="transmembrane region" description="Helical" evidence="1">
    <location>
        <begin position="157"/>
        <end position="177"/>
    </location>
</feature>
<feature type="transmembrane region" description="Helical" evidence="1">
    <location>
        <begin position="204"/>
        <end position="224"/>
    </location>
</feature>
<feature type="transmembrane region" description="Helical" evidence="1">
    <location>
        <begin position="228"/>
        <end position="248"/>
    </location>
</feature>
<feature type="transmembrane region" description="Helical" evidence="1">
    <location>
        <begin position="257"/>
        <end position="277"/>
    </location>
</feature>
<sequence>MNPYIVLLKPRVIWLLILSSVVGYVYAAGTVDWGRLAALTAAATLAVGGSAAFNHYWERDIDAAMARTARRPLPAGAIPPSNALVYSLALSATGILLGFYLLGPLPGVFVALGWFFYAVVYTVWLKRRTWLNILGGGFAGNATFLGGYALGKGTVDLPAVLISFAIYLWIPSHIWALAYKYREDYRRAGVPMLPAIIDEGKAVAIISALNIASAAYILWLYLVFGRGLPGLALVLAGVAGTVATSALALREKSDRAMWRMYKASSPILTLFLLALVFS</sequence>
<proteinExistence type="inferred from homology"/>
<dbReference type="EC" id="2.5.1.141" evidence="1"/>
<dbReference type="EMBL" id="CP001014">
    <property type="protein sequence ID" value="ACB40728.1"/>
    <property type="molecule type" value="Genomic_DNA"/>
</dbReference>
<dbReference type="RefSeq" id="WP_012351147.1">
    <property type="nucleotide sequence ID" value="NC_010525.1"/>
</dbReference>
<dbReference type="SMR" id="B1YB28"/>
<dbReference type="STRING" id="444157.Tneu_1811"/>
<dbReference type="GeneID" id="6164385"/>
<dbReference type="KEGG" id="tne:Tneu_1811"/>
<dbReference type="eggNOG" id="arCOG00479">
    <property type="taxonomic scope" value="Archaea"/>
</dbReference>
<dbReference type="HOGENOM" id="CLU_029631_0_1_2"/>
<dbReference type="OrthoDB" id="131615at2157"/>
<dbReference type="UniPathway" id="UPA00834">
    <property type="reaction ID" value="UER00712"/>
</dbReference>
<dbReference type="Proteomes" id="UP000001694">
    <property type="component" value="Chromosome"/>
</dbReference>
<dbReference type="GO" id="GO:0005886">
    <property type="term" value="C:plasma membrane"/>
    <property type="evidence" value="ECO:0007669"/>
    <property type="project" value="UniProtKB-SubCell"/>
</dbReference>
<dbReference type="GO" id="GO:0008495">
    <property type="term" value="F:protoheme IX farnesyltransferase activity"/>
    <property type="evidence" value="ECO:0007669"/>
    <property type="project" value="UniProtKB-UniRule"/>
</dbReference>
<dbReference type="GO" id="GO:0048034">
    <property type="term" value="P:heme O biosynthetic process"/>
    <property type="evidence" value="ECO:0007669"/>
    <property type="project" value="UniProtKB-UniRule"/>
</dbReference>
<dbReference type="CDD" id="cd13957">
    <property type="entry name" value="PT_UbiA_Cox10"/>
    <property type="match status" value="1"/>
</dbReference>
<dbReference type="Gene3D" id="1.10.357.140">
    <property type="entry name" value="UbiA prenyltransferase"/>
    <property type="match status" value="1"/>
</dbReference>
<dbReference type="HAMAP" id="MF_00154">
    <property type="entry name" value="CyoE_CtaB"/>
    <property type="match status" value="1"/>
</dbReference>
<dbReference type="InterPro" id="IPR006369">
    <property type="entry name" value="Protohaem_IX_farnesylTrfase"/>
</dbReference>
<dbReference type="InterPro" id="IPR000537">
    <property type="entry name" value="UbiA_prenyltransferase"/>
</dbReference>
<dbReference type="InterPro" id="IPR030470">
    <property type="entry name" value="UbiA_prenylTrfase_CS"/>
</dbReference>
<dbReference type="InterPro" id="IPR044878">
    <property type="entry name" value="UbiA_sf"/>
</dbReference>
<dbReference type="NCBIfam" id="TIGR01473">
    <property type="entry name" value="cyoE_ctaB"/>
    <property type="match status" value="1"/>
</dbReference>
<dbReference type="PANTHER" id="PTHR43448">
    <property type="entry name" value="PROTOHEME IX FARNESYLTRANSFERASE, MITOCHONDRIAL"/>
    <property type="match status" value="1"/>
</dbReference>
<dbReference type="PANTHER" id="PTHR43448:SF2">
    <property type="entry name" value="PROTOHEME IX FARNESYLTRANSFERASE, MITOCHONDRIAL"/>
    <property type="match status" value="1"/>
</dbReference>
<dbReference type="Pfam" id="PF01040">
    <property type="entry name" value="UbiA"/>
    <property type="match status" value="1"/>
</dbReference>
<dbReference type="PROSITE" id="PS00943">
    <property type="entry name" value="UBIA"/>
    <property type="match status" value="1"/>
</dbReference>
<gene>
    <name evidence="1" type="primary">ctaB</name>
    <name type="ordered locus">Tneu_1811</name>
</gene>
<comment type="function">
    <text evidence="1">Converts heme B (protoheme IX) to heme O by substitution of the vinyl group on carbon 2 of heme B porphyrin ring with a hydroxyethyl farnesyl side group.</text>
</comment>
<comment type="catalytic activity">
    <reaction evidence="1">
        <text>heme b + (2E,6E)-farnesyl diphosphate + H2O = Fe(II)-heme o + diphosphate</text>
        <dbReference type="Rhea" id="RHEA:28070"/>
        <dbReference type="ChEBI" id="CHEBI:15377"/>
        <dbReference type="ChEBI" id="CHEBI:33019"/>
        <dbReference type="ChEBI" id="CHEBI:60344"/>
        <dbReference type="ChEBI" id="CHEBI:60530"/>
        <dbReference type="ChEBI" id="CHEBI:175763"/>
        <dbReference type="EC" id="2.5.1.141"/>
    </reaction>
</comment>
<comment type="pathway">
    <text evidence="1">Porphyrin-containing compound metabolism; heme O biosynthesis; heme O from protoheme: step 1/1.</text>
</comment>
<comment type="subcellular location">
    <subcellularLocation>
        <location evidence="1">Cell membrane</location>
        <topology evidence="1">Multi-pass membrane protein</topology>
    </subcellularLocation>
</comment>
<comment type="miscellaneous">
    <text evidence="1">Carbon 2 of the heme B porphyrin ring is defined according to the Fischer nomenclature.</text>
</comment>
<comment type="similarity">
    <text evidence="1">Belongs to the UbiA prenyltransferase family. Protoheme IX farnesyltransferase subfamily.</text>
</comment>
<evidence type="ECO:0000255" key="1">
    <source>
        <dbReference type="HAMAP-Rule" id="MF_00154"/>
    </source>
</evidence>